<proteinExistence type="inferred from homology"/>
<keyword id="KW-0249">Electron transport</keyword>
<keyword id="KW-0472">Membrane</keyword>
<keyword id="KW-0496">Mitochondrion</keyword>
<keyword id="KW-0520">NAD</keyword>
<keyword id="KW-0679">Respiratory chain</keyword>
<keyword id="KW-1278">Translocase</keyword>
<keyword id="KW-0812">Transmembrane</keyword>
<keyword id="KW-1133">Transmembrane helix</keyword>
<keyword id="KW-0813">Transport</keyword>
<keyword id="KW-0830">Ubiquinone</keyword>
<protein>
    <recommendedName>
        <fullName>NADH-ubiquinone oxidoreductase chain 4L</fullName>
        <ecNumber>7.1.1.2</ecNumber>
    </recommendedName>
    <alternativeName>
        <fullName>NADH dehydrogenase subunit 4L</fullName>
    </alternativeName>
</protein>
<feature type="chain" id="PRO_0000118474" description="NADH-ubiquinone oxidoreductase chain 4L">
    <location>
        <begin position="1"/>
        <end position="98"/>
    </location>
</feature>
<feature type="transmembrane region" description="Helical" evidence="2">
    <location>
        <begin position="1"/>
        <end position="21"/>
    </location>
</feature>
<feature type="transmembrane region" description="Helical" evidence="2">
    <location>
        <begin position="24"/>
        <end position="44"/>
    </location>
</feature>
<feature type="transmembrane region" description="Helical" evidence="2">
    <location>
        <begin position="61"/>
        <end position="81"/>
    </location>
</feature>
<geneLocation type="mitochondrion"/>
<dbReference type="EC" id="7.1.1.2"/>
<dbReference type="EMBL" id="X55514">
    <property type="protein sequence ID" value="CAA39125.1"/>
    <property type="molecule type" value="Genomic_DNA"/>
</dbReference>
<dbReference type="PIR" id="S14206">
    <property type="entry name" value="S14206"/>
</dbReference>
<dbReference type="SMR" id="P25000"/>
<dbReference type="GO" id="GO:0031966">
    <property type="term" value="C:mitochondrial membrane"/>
    <property type="evidence" value="ECO:0007669"/>
    <property type="project" value="UniProtKB-SubCell"/>
</dbReference>
<dbReference type="GO" id="GO:0030964">
    <property type="term" value="C:NADH dehydrogenase complex"/>
    <property type="evidence" value="ECO:0007669"/>
    <property type="project" value="TreeGrafter"/>
</dbReference>
<dbReference type="GO" id="GO:0008137">
    <property type="term" value="F:NADH dehydrogenase (ubiquinone) activity"/>
    <property type="evidence" value="ECO:0007669"/>
    <property type="project" value="UniProtKB-EC"/>
</dbReference>
<dbReference type="GO" id="GO:0042773">
    <property type="term" value="P:ATP synthesis coupled electron transport"/>
    <property type="evidence" value="ECO:0007669"/>
    <property type="project" value="InterPro"/>
</dbReference>
<dbReference type="Gene3D" id="1.10.287.3510">
    <property type="match status" value="1"/>
</dbReference>
<dbReference type="InterPro" id="IPR001133">
    <property type="entry name" value="NADH_UbQ_OxRdtase_chain4L/K"/>
</dbReference>
<dbReference type="InterPro" id="IPR039428">
    <property type="entry name" value="NUOK/Mnh_C1-like"/>
</dbReference>
<dbReference type="PANTHER" id="PTHR11434:SF0">
    <property type="entry name" value="NADH-UBIQUINONE OXIDOREDUCTASE CHAIN 4L"/>
    <property type="match status" value="1"/>
</dbReference>
<dbReference type="PANTHER" id="PTHR11434">
    <property type="entry name" value="NADH-UBIQUINONE OXIDOREDUCTASE SUBUNIT ND4L"/>
    <property type="match status" value="1"/>
</dbReference>
<dbReference type="Pfam" id="PF00420">
    <property type="entry name" value="Oxidored_q2"/>
    <property type="match status" value="1"/>
</dbReference>
<sequence>MSSYLTIIISFFYLGILGILLNRLHLLSILLCFELLLISLFIWICNTLFKTFNNLILSNNLILLTLSACEASAGLSLMVALSRTHNSDLVSSMNILQQ</sequence>
<evidence type="ECO:0000250" key="1"/>
<evidence type="ECO:0000255" key="2"/>
<evidence type="ECO:0000305" key="3"/>
<organism>
    <name type="scientific">Pisaster ochraceus</name>
    <name type="common">Ochre sea star</name>
    <name type="synonym">Asterias ochracea</name>
    <dbReference type="NCBI Taxonomy" id="7612"/>
    <lineage>
        <taxon>Eukaryota</taxon>
        <taxon>Metazoa</taxon>
        <taxon>Echinodermata</taxon>
        <taxon>Eleutherozoa</taxon>
        <taxon>Asterozoa</taxon>
        <taxon>Asteroidea</taxon>
        <taxon>Forcipulatacea</taxon>
        <taxon>Forcipulatida</taxon>
        <taxon>Asteriidae</taxon>
        <taxon>Pisaster</taxon>
    </lineage>
</organism>
<gene>
    <name type="primary">ND4L</name>
</gene>
<reference key="1">
    <citation type="journal article" date="1990" name="J. Mol. Evol.">
        <title>Nucleotide sequence of nine protein-coding genes and 22 tRNAs in the mitochondrial DNA of the sea star Pisaster ochraceus.</title>
        <authorList>
            <person name="Smith M.J."/>
            <person name="Banfield D.K."/>
            <person name="Doteval K."/>
            <person name="Gorski S."/>
            <person name="Kowbel D.J."/>
        </authorList>
    </citation>
    <scope>NUCLEOTIDE SEQUENCE [GENOMIC DNA]</scope>
</reference>
<accession>P25000</accession>
<comment type="function">
    <text evidence="1">Core subunit of the mitochondrial membrane respiratory chain NADH dehydrogenase (Complex I) that is believed to belong to the minimal assembly required for catalysis. Complex I functions in the transfer of electrons from NADH to the respiratory chain. The immediate electron acceptor for the enzyme is believed to be ubiquinone (By similarity).</text>
</comment>
<comment type="catalytic activity">
    <reaction>
        <text>a ubiquinone + NADH + 5 H(+)(in) = a ubiquinol + NAD(+) + 4 H(+)(out)</text>
        <dbReference type="Rhea" id="RHEA:29091"/>
        <dbReference type="Rhea" id="RHEA-COMP:9565"/>
        <dbReference type="Rhea" id="RHEA-COMP:9566"/>
        <dbReference type="ChEBI" id="CHEBI:15378"/>
        <dbReference type="ChEBI" id="CHEBI:16389"/>
        <dbReference type="ChEBI" id="CHEBI:17976"/>
        <dbReference type="ChEBI" id="CHEBI:57540"/>
        <dbReference type="ChEBI" id="CHEBI:57945"/>
        <dbReference type="EC" id="7.1.1.2"/>
    </reaction>
</comment>
<comment type="subcellular location">
    <subcellularLocation>
        <location evidence="1">Mitochondrion membrane</location>
        <topology evidence="1">Multi-pass membrane protein</topology>
    </subcellularLocation>
</comment>
<comment type="similarity">
    <text evidence="3">Belongs to the complex I subunit 4L family.</text>
</comment>
<name>NU4LM_PISOC</name>